<dbReference type="EMBL" id="AM408590">
    <property type="protein sequence ID" value="CAL72063.1"/>
    <property type="molecule type" value="Genomic_DNA"/>
</dbReference>
<dbReference type="RefSeq" id="WP_003410624.1">
    <property type="nucleotide sequence ID" value="NC_008769.1"/>
</dbReference>
<dbReference type="SMR" id="A1KKA2"/>
<dbReference type="GeneID" id="45426034"/>
<dbReference type="KEGG" id="mbb:BCG_2075c"/>
<dbReference type="HOGENOM" id="CLU_139869_0_1_11"/>
<dbReference type="Proteomes" id="UP000001472">
    <property type="component" value="Chromosome"/>
</dbReference>
<dbReference type="GO" id="GO:0015935">
    <property type="term" value="C:small ribosomal subunit"/>
    <property type="evidence" value="ECO:0007669"/>
    <property type="project" value="TreeGrafter"/>
</dbReference>
<dbReference type="GO" id="GO:0019843">
    <property type="term" value="F:rRNA binding"/>
    <property type="evidence" value="ECO:0007669"/>
    <property type="project" value="UniProtKB-UniRule"/>
</dbReference>
<dbReference type="GO" id="GO:0003735">
    <property type="term" value="F:structural constituent of ribosome"/>
    <property type="evidence" value="ECO:0007669"/>
    <property type="project" value="InterPro"/>
</dbReference>
<dbReference type="GO" id="GO:0006412">
    <property type="term" value="P:translation"/>
    <property type="evidence" value="ECO:0007669"/>
    <property type="project" value="UniProtKB-UniRule"/>
</dbReference>
<dbReference type="FunFam" id="1.10.287.1480:FF:000001">
    <property type="entry name" value="30S ribosomal protein S14"/>
    <property type="match status" value="1"/>
</dbReference>
<dbReference type="Gene3D" id="1.10.287.1480">
    <property type="match status" value="1"/>
</dbReference>
<dbReference type="HAMAP" id="MF_00537">
    <property type="entry name" value="Ribosomal_uS14_1"/>
    <property type="match status" value="1"/>
</dbReference>
<dbReference type="InterPro" id="IPR001209">
    <property type="entry name" value="Ribosomal_uS14"/>
</dbReference>
<dbReference type="InterPro" id="IPR023036">
    <property type="entry name" value="Ribosomal_uS14_bac/plastid"/>
</dbReference>
<dbReference type="NCBIfam" id="NF006477">
    <property type="entry name" value="PRK08881.1"/>
    <property type="match status" value="1"/>
</dbReference>
<dbReference type="PANTHER" id="PTHR19836">
    <property type="entry name" value="30S RIBOSOMAL PROTEIN S14"/>
    <property type="match status" value="1"/>
</dbReference>
<dbReference type="PANTHER" id="PTHR19836:SF23">
    <property type="entry name" value="SMALL RIBOSOMAL SUBUNIT PROTEIN US14A"/>
    <property type="match status" value="1"/>
</dbReference>
<dbReference type="Pfam" id="PF00253">
    <property type="entry name" value="Ribosomal_S14"/>
    <property type="match status" value="1"/>
</dbReference>
<dbReference type="SUPFAM" id="SSF57716">
    <property type="entry name" value="Glucocorticoid receptor-like (DNA-binding domain)"/>
    <property type="match status" value="1"/>
</dbReference>
<gene>
    <name evidence="1" type="primary">rpsN</name>
    <name type="ordered locus">BCG_2075c</name>
</gene>
<accession>A1KKA2</accession>
<protein>
    <recommendedName>
        <fullName evidence="1">Small ribosomal subunit protein uS14A</fullName>
    </recommendedName>
    <alternativeName>
        <fullName evidence="3">30S ribosomal protein S14</fullName>
    </alternativeName>
</protein>
<proteinExistence type="inferred from homology"/>
<sequence>MAKKSKIVKNQRRAATVARYASRRTALKDIIRSPSSAPEQRSTAQRALARQPRDASPVRLRNRDAIDGRPRGHLRKFGLSRVRVRQLAHDGHLPGVRKASW</sequence>
<comment type="function">
    <text evidence="1">Binds 16S rRNA, required for the assembly of 30S particles and may also be responsible for determining the conformation of the 16S rRNA at the A site.</text>
</comment>
<comment type="subunit">
    <text evidence="1">Part of the 30S ribosomal subunit. Contacts proteins S3 and S10.</text>
</comment>
<comment type="similarity">
    <text evidence="1">Belongs to the universal ribosomal protein uS14 family.</text>
</comment>
<name>RS14_MYCBP</name>
<reference key="1">
    <citation type="journal article" date="2007" name="Proc. Natl. Acad. Sci. U.S.A.">
        <title>Genome plasticity of BCG and impact on vaccine efficacy.</title>
        <authorList>
            <person name="Brosch R."/>
            <person name="Gordon S.V."/>
            <person name="Garnier T."/>
            <person name="Eiglmeier K."/>
            <person name="Frigui W."/>
            <person name="Valenti P."/>
            <person name="Dos Santos S."/>
            <person name="Duthoy S."/>
            <person name="Lacroix C."/>
            <person name="Garcia-Pelayo C."/>
            <person name="Inwald J.K."/>
            <person name="Golby P."/>
            <person name="Garcia J.N."/>
            <person name="Hewinson R.G."/>
            <person name="Behr M.A."/>
            <person name="Quail M.A."/>
            <person name="Churcher C."/>
            <person name="Barrell B.G."/>
            <person name="Parkhill J."/>
            <person name="Cole S.T."/>
        </authorList>
    </citation>
    <scope>NUCLEOTIDE SEQUENCE [LARGE SCALE GENOMIC DNA]</scope>
    <source>
        <strain>BCG / Pasteur 1173P2</strain>
    </source>
</reference>
<keyword id="KW-0687">Ribonucleoprotein</keyword>
<keyword id="KW-0689">Ribosomal protein</keyword>
<keyword id="KW-0694">RNA-binding</keyword>
<keyword id="KW-0699">rRNA-binding</keyword>
<feature type="chain" id="PRO_1000128453" description="Small ribosomal subunit protein uS14A">
    <location>
        <begin position="1"/>
        <end position="101"/>
    </location>
</feature>
<feature type="region of interest" description="Disordered" evidence="2">
    <location>
        <begin position="28"/>
        <end position="57"/>
    </location>
</feature>
<feature type="compositionally biased region" description="Polar residues" evidence="2">
    <location>
        <begin position="33"/>
        <end position="45"/>
    </location>
</feature>
<evidence type="ECO:0000255" key="1">
    <source>
        <dbReference type="HAMAP-Rule" id="MF_00537"/>
    </source>
</evidence>
<evidence type="ECO:0000256" key="2">
    <source>
        <dbReference type="SAM" id="MobiDB-lite"/>
    </source>
</evidence>
<evidence type="ECO:0000305" key="3"/>
<organism>
    <name type="scientific">Mycobacterium bovis (strain BCG / Pasteur 1173P2)</name>
    <dbReference type="NCBI Taxonomy" id="410289"/>
    <lineage>
        <taxon>Bacteria</taxon>
        <taxon>Bacillati</taxon>
        <taxon>Actinomycetota</taxon>
        <taxon>Actinomycetes</taxon>
        <taxon>Mycobacteriales</taxon>
        <taxon>Mycobacteriaceae</taxon>
        <taxon>Mycobacterium</taxon>
        <taxon>Mycobacterium tuberculosis complex</taxon>
    </lineage>
</organism>